<feature type="chain" id="PRO_1000195584" description="Large ribosomal subunit protein uL11">
    <location>
        <begin position="1"/>
        <end position="143"/>
    </location>
</feature>
<organism>
    <name type="scientific">Bifidobacterium longum subsp. infantis (strain ATCC 15697 / DSM 20088 / JCM 1222 / NCTC 11817 / S12)</name>
    <dbReference type="NCBI Taxonomy" id="391904"/>
    <lineage>
        <taxon>Bacteria</taxon>
        <taxon>Bacillati</taxon>
        <taxon>Actinomycetota</taxon>
        <taxon>Actinomycetes</taxon>
        <taxon>Bifidobacteriales</taxon>
        <taxon>Bifidobacteriaceae</taxon>
        <taxon>Bifidobacterium</taxon>
    </lineage>
</organism>
<accession>B7GNJ6</accession>
<accession>E8MNS9</accession>
<gene>
    <name evidence="1" type="primary">rplK</name>
    <name type="ordered locus">Blon_2294</name>
    <name type="ordered locus">BLIJ_2368</name>
</gene>
<evidence type="ECO:0000255" key="1">
    <source>
        <dbReference type="HAMAP-Rule" id="MF_00736"/>
    </source>
</evidence>
<evidence type="ECO:0000305" key="2"/>
<name>RL11_BIFLS</name>
<sequence>MAPKKKVSALIKLQIQAGKANPAPPLGPALGSHGVNIMDFCKAYNAQTQDKMGQVIPVEITVYEDRSFTFVLKTPPAAALLKKAAGIEKGTENPLTHKVGSVTKAQVREIAETKMEDLSARDIEAGMKIIEGTARSMGITVTD</sequence>
<comment type="function">
    <text evidence="1">Forms part of the ribosomal stalk which helps the ribosome interact with GTP-bound translation factors.</text>
</comment>
<comment type="subunit">
    <text evidence="1">Part of the ribosomal stalk of the 50S ribosomal subunit. Interacts with L10 and the large rRNA to form the base of the stalk. L10 forms an elongated spine to which L12 dimers bind in a sequential fashion forming a multimeric L10(L12)X complex.</text>
</comment>
<comment type="PTM">
    <text evidence="1">One or more lysine residues are methylated.</text>
</comment>
<comment type="similarity">
    <text evidence="1">Belongs to the universal ribosomal protein uL11 family.</text>
</comment>
<reference key="1">
    <citation type="journal article" date="2008" name="Proc. Natl. Acad. Sci. U.S.A.">
        <title>The genome sequence of Bifidobacterium longum subsp. infantis reveals adaptations for milk utilization within the infant microbiome.</title>
        <authorList>
            <person name="Sela D.A."/>
            <person name="Chapman J."/>
            <person name="Adeuya A."/>
            <person name="Kim J.H."/>
            <person name="Chen F."/>
            <person name="Whitehead T.R."/>
            <person name="Lapidus A."/>
            <person name="Rokhsar D.S."/>
            <person name="Lebrilla C.B."/>
            <person name="German J.B."/>
            <person name="Price N.P."/>
            <person name="Richardson P.M."/>
            <person name="Mills D.A."/>
        </authorList>
    </citation>
    <scope>NUCLEOTIDE SEQUENCE [LARGE SCALE GENOMIC DNA]</scope>
    <source>
        <strain>ATCC 15697 / DSM 20088 / JCM 1222 / NCTC 11817 / S12</strain>
    </source>
</reference>
<reference key="2">
    <citation type="journal article" date="2011" name="Nature">
        <title>Bifidobacteria can protect from enteropathogenic infection through production of acetate.</title>
        <authorList>
            <person name="Fukuda S."/>
            <person name="Toh H."/>
            <person name="Hase K."/>
            <person name="Oshima K."/>
            <person name="Nakanishi Y."/>
            <person name="Yoshimura K."/>
            <person name="Tobe T."/>
            <person name="Clarke J.M."/>
            <person name="Topping D.L."/>
            <person name="Suzuki T."/>
            <person name="Taylor T.D."/>
            <person name="Itoh K."/>
            <person name="Kikuchi J."/>
            <person name="Morita H."/>
            <person name="Hattori M."/>
            <person name="Ohno H."/>
        </authorList>
    </citation>
    <scope>NUCLEOTIDE SEQUENCE [LARGE SCALE GENOMIC DNA]</scope>
    <source>
        <strain>ATCC 15697 / DSM 20088 / JCM 1222 / NCTC 11817 / S12</strain>
    </source>
</reference>
<dbReference type="EMBL" id="CP001095">
    <property type="protein sequence ID" value="ACJ53352.1"/>
    <property type="molecule type" value="Genomic_DNA"/>
</dbReference>
<dbReference type="EMBL" id="AP010889">
    <property type="protein sequence ID" value="BAJ69945.1"/>
    <property type="molecule type" value="Genomic_DNA"/>
</dbReference>
<dbReference type="RefSeq" id="WP_003829785.1">
    <property type="nucleotide sequence ID" value="NZ_JDTT01000025.1"/>
</dbReference>
<dbReference type="SMR" id="B7GNJ6"/>
<dbReference type="GeneID" id="29242351"/>
<dbReference type="KEGG" id="bln:Blon_2294"/>
<dbReference type="KEGG" id="blon:BLIJ_2368"/>
<dbReference type="PATRIC" id="fig|391904.8.peg.2369"/>
<dbReference type="HOGENOM" id="CLU_074237_2_1_11"/>
<dbReference type="Proteomes" id="UP000001360">
    <property type="component" value="Chromosome"/>
</dbReference>
<dbReference type="GO" id="GO:0022625">
    <property type="term" value="C:cytosolic large ribosomal subunit"/>
    <property type="evidence" value="ECO:0007669"/>
    <property type="project" value="TreeGrafter"/>
</dbReference>
<dbReference type="GO" id="GO:0070180">
    <property type="term" value="F:large ribosomal subunit rRNA binding"/>
    <property type="evidence" value="ECO:0007669"/>
    <property type="project" value="UniProtKB-UniRule"/>
</dbReference>
<dbReference type="GO" id="GO:0003735">
    <property type="term" value="F:structural constituent of ribosome"/>
    <property type="evidence" value="ECO:0007669"/>
    <property type="project" value="InterPro"/>
</dbReference>
<dbReference type="GO" id="GO:0006412">
    <property type="term" value="P:translation"/>
    <property type="evidence" value="ECO:0007669"/>
    <property type="project" value="UniProtKB-UniRule"/>
</dbReference>
<dbReference type="CDD" id="cd00349">
    <property type="entry name" value="Ribosomal_L11"/>
    <property type="match status" value="1"/>
</dbReference>
<dbReference type="FunFam" id="1.10.10.250:FF:000001">
    <property type="entry name" value="50S ribosomal protein L11"/>
    <property type="match status" value="1"/>
</dbReference>
<dbReference type="FunFam" id="3.30.1550.10:FF:000001">
    <property type="entry name" value="50S ribosomal protein L11"/>
    <property type="match status" value="1"/>
</dbReference>
<dbReference type="Gene3D" id="1.10.10.250">
    <property type="entry name" value="Ribosomal protein L11, C-terminal domain"/>
    <property type="match status" value="1"/>
</dbReference>
<dbReference type="Gene3D" id="3.30.1550.10">
    <property type="entry name" value="Ribosomal protein L11/L12, N-terminal domain"/>
    <property type="match status" value="1"/>
</dbReference>
<dbReference type="HAMAP" id="MF_00736">
    <property type="entry name" value="Ribosomal_uL11"/>
    <property type="match status" value="1"/>
</dbReference>
<dbReference type="InterPro" id="IPR000911">
    <property type="entry name" value="Ribosomal_uL11"/>
</dbReference>
<dbReference type="InterPro" id="IPR006519">
    <property type="entry name" value="Ribosomal_uL11_bac-typ"/>
</dbReference>
<dbReference type="InterPro" id="IPR020783">
    <property type="entry name" value="Ribosomal_uL11_C"/>
</dbReference>
<dbReference type="InterPro" id="IPR036769">
    <property type="entry name" value="Ribosomal_uL11_C_sf"/>
</dbReference>
<dbReference type="InterPro" id="IPR020785">
    <property type="entry name" value="Ribosomal_uL11_CS"/>
</dbReference>
<dbReference type="InterPro" id="IPR020784">
    <property type="entry name" value="Ribosomal_uL11_N"/>
</dbReference>
<dbReference type="InterPro" id="IPR036796">
    <property type="entry name" value="Ribosomal_uL11_N_sf"/>
</dbReference>
<dbReference type="NCBIfam" id="TIGR01632">
    <property type="entry name" value="L11_bact"/>
    <property type="match status" value="1"/>
</dbReference>
<dbReference type="PANTHER" id="PTHR11661">
    <property type="entry name" value="60S RIBOSOMAL PROTEIN L12"/>
    <property type="match status" value="1"/>
</dbReference>
<dbReference type="PANTHER" id="PTHR11661:SF1">
    <property type="entry name" value="LARGE RIBOSOMAL SUBUNIT PROTEIN UL11M"/>
    <property type="match status" value="1"/>
</dbReference>
<dbReference type="Pfam" id="PF00298">
    <property type="entry name" value="Ribosomal_L11"/>
    <property type="match status" value="1"/>
</dbReference>
<dbReference type="Pfam" id="PF03946">
    <property type="entry name" value="Ribosomal_L11_N"/>
    <property type="match status" value="1"/>
</dbReference>
<dbReference type="SMART" id="SM00649">
    <property type="entry name" value="RL11"/>
    <property type="match status" value="1"/>
</dbReference>
<dbReference type="SUPFAM" id="SSF54747">
    <property type="entry name" value="Ribosomal L11/L12e N-terminal domain"/>
    <property type="match status" value="1"/>
</dbReference>
<dbReference type="SUPFAM" id="SSF46906">
    <property type="entry name" value="Ribosomal protein L11, C-terminal domain"/>
    <property type="match status" value="1"/>
</dbReference>
<dbReference type="PROSITE" id="PS00359">
    <property type="entry name" value="RIBOSOMAL_L11"/>
    <property type="match status" value="1"/>
</dbReference>
<proteinExistence type="inferred from homology"/>
<keyword id="KW-0488">Methylation</keyword>
<keyword id="KW-0687">Ribonucleoprotein</keyword>
<keyword id="KW-0689">Ribosomal protein</keyword>
<keyword id="KW-0694">RNA-binding</keyword>
<keyword id="KW-0699">rRNA-binding</keyword>
<protein>
    <recommendedName>
        <fullName evidence="1">Large ribosomal subunit protein uL11</fullName>
    </recommendedName>
    <alternativeName>
        <fullName evidence="2">50S ribosomal protein L11</fullName>
    </alternativeName>
</protein>